<dbReference type="EC" id="2.1.3.15" evidence="1"/>
<dbReference type="EMBL" id="CP000880">
    <property type="protein sequence ID" value="ABX20459.1"/>
    <property type="status" value="ALT_INIT"/>
    <property type="molecule type" value="Genomic_DNA"/>
</dbReference>
<dbReference type="SMR" id="A9MJ59"/>
<dbReference type="STRING" id="41514.SARI_00533"/>
<dbReference type="KEGG" id="ses:SARI_00533"/>
<dbReference type="HOGENOM" id="CLU_015486_1_0_6"/>
<dbReference type="UniPathway" id="UPA00655">
    <property type="reaction ID" value="UER00711"/>
</dbReference>
<dbReference type="Proteomes" id="UP000002084">
    <property type="component" value="Chromosome"/>
</dbReference>
<dbReference type="GO" id="GO:0009329">
    <property type="term" value="C:acetate CoA-transferase complex"/>
    <property type="evidence" value="ECO:0007669"/>
    <property type="project" value="TreeGrafter"/>
</dbReference>
<dbReference type="GO" id="GO:0003989">
    <property type="term" value="F:acetyl-CoA carboxylase activity"/>
    <property type="evidence" value="ECO:0007669"/>
    <property type="project" value="InterPro"/>
</dbReference>
<dbReference type="GO" id="GO:0005524">
    <property type="term" value="F:ATP binding"/>
    <property type="evidence" value="ECO:0007669"/>
    <property type="project" value="UniProtKB-KW"/>
</dbReference>
<dbReference type="GO" id="GO:0016743">
    <property type="term" value="F:carboxyl- or carbamoyltransferase activity"/>
    <property type="evidence" value="ECO:0007669"/>
    <property type="project" value="UniProtKB-UniRule"/>
</dbReference>
<dbReference type="GO" id="GO:0008270">
    <property type="term" value="F:zinc ion binding"/>
    <property type="evidence" value="ECO:0007669"/>
    <property type="project" value="UniProtKB-UniRule"/>
</dbReference>
<dbReference type="GO" id="GO:0006633">
    <property type="term" value="P:fatty acid biosynthetic process"/>
    <property type="evidence" value="ECO:0007669"/>
    <property type="project" value="UniProtKB-KW"/>
</dbReference>
<dbReference type="GO" id="GO:2001295">
    <property type="term" value="P:malonyl-CoA biosynthetic process"/>
    <property type="evidence" value="ECO:0007669"/>
    <property type="project" value="UniProtKB-UniRule"/>
</dbReference>
<dbReference type="FunFam" id="3.90.226.10:FF:000013">
    <property type="entry name" value="Acetyl-coenzyme A carboxylase carboxyl transferase subunit beta"/>
    <property type="match status" value="1"/>
</dbReference>
<dbReference type="Gene3D" id="3.90.226.10">
    <property type="entry name" value="2-enoyl-CoA Hydratase, Chain A, domain 1"/>
    <property type="match status" value="1"/>
</dbReference>
<dbReference type="HAMAP" id="MF_01395">
    <property type="entry name" value="AcetylCoA_CT_beta"/>
    <property type="match status" value="1"/>
</dbReference>
<dbReference type="InterPro" id="IPR034733">
    <property type="entry name" value="AcCoA_carboxyl_beta"/>
</dbReference>
<dbReference type="InterPro" id="IPR000438">
    <property type="entry name" value="Acetyl_CoA_COase_Trfase_b_su"/>
</dbReference>
<dbReference type="InterPro" id="IPR029045">
    <property type="entry name" value="ClpP/crotonase-like_dom_sf"/>
</dbReference>
<dbReference type="InterPro" id="IPR011762">
    <property type="entry name" value="COA_CT_N"/>
</dbReference>
<dbReference type="InterPro" id="IPR041010">
    <property type="entry name" value="Znf-ACC"/>
</dbReference>
<dbReference type="NCBIfam" id="TIGR00515">
    <property type="entry name" value="accD"/>
    <property type="match status" value="1"/>
</dbReference>
<dbReference type="PANTHER" id="PTHR42995">
    <property type="entry name" value="ACETYL-COENZYME A CARBOXYLASE CARBOXYL TRANSFERASE SUBUNIT BETA, CHLOROPLASTIC"/>
    <property type="match status" value="1"/>
</dbReference>
<dbReference type="PANTHER" id="PTHR42995:SF5">
    <property type="entry name" value="ACETYL-COENZYME A CARBOXYLASE CARBOXYL TRANSFERASE SUBUNIT BETA, CHLOROPLASTIC"/>
    <property type="match status" value="1"/>
</dbReference>
<dbReference type="Pfam" id="PF01039">
    <property type="entry name" value="Carboxyl_trans"/>
    <property type="match status" value="1"/>
</dbReference>
<dbReference type="Pfam" id="PF17848">
    <property type="entry name" value="Zn_ribbon_ACC"/>
    <property type="match status" value="1"/>
</dbReference>
<dbReference type="PRINTS" id="PR01070">
    <property type="entry name" value="ACCCTRFRASEB"/>
</dbReference>
<dbReference type="SUPFAM" id="SSF52096">
    <property type="entry name" value="ClpP/crotonase"/>
    <property type="match status" value="1"/>
</dbReference>
<dbReference type="PROSITE" id="PS50980">
    <property type="entry name" value="COA_CT_NTER"/>
    <property type="match status" value="1"/>
</dbReference>
<gene>
    <name evidence="1" type="primary">accD</name>
    <name type="ordered locus">SARI_00533</name>
</gene>
<feature type="chain" id="PRO_0000359049" description="Acetyl-coenzyme A carboxylase carboxyl transferase subunit beta">
    <location>
        <begin position="1"/>
        <end position="304"/>
    </location>
</feature>
<feature type="domain" description="CoA carboxyltransferase N-terminal" evidence="2">
    <location>
        <begin position="23"/>
        <end position="292"/>
    </location>
</feature>
<feature type="zinc finger region" description="C4-type" evidence="1">
    <location>
        <begin position="27"/>
        <end position="49"/>
    </location>
</feature>
<feature type="region of interest" description="Disordered" evidence="3">
    <location>
        <begin position="284"/>
        <end position="304"/>
    </location>
</feature>
<feature type="binding site" evidence="1">
    <location>
        <position position="27"/>
    </location>
    <ligand>
        <name>Zn(2+)</name>
        <dbReference type="ChEBI" id="CHEBI:29105"/>
    </ligand>
</feature>
<feature type="binding site" evidence="1">
    <location>
        <position position="30"/>
    </location>
    <ligand>
        <name>Zn(2+)</name>
        <dbReference type="ChEBI" id="CHEBI:29105"/>
    </ligand>
</feature>
<feature type="binding site" evidence="1">
    <location>
        <position position="46"/>
    </location>
    <ligand>
        <name>Zn(2+)</name>
        <dbReference type="ChEBI" id="CHEBI:29105"/>
    </ligand>
</feature>
<feature type="binding site" evidence="1">
    <location>
        <position position="49"/>
    </location>
    <ligand>
        <name>Zn(2+)</name>
        <dbReference type="ChEBI" id="CHEBI:29105"/>
    </ligand>
</feature>
<keyword id="KW-0067">ATP-binding</keyword>
<keyword id="KW-0963">Cytoplasm</keyword>
<keyword id="KW-0275">Fatty acid biosynthesis</keyword>
<keyword id="KW-0276">Fatty acid metabolism</keyword>
<keyword id="KW-0444">Lipid biosynthesis</keyword>
<keyword id="KW-0443">Lipid metabolism</keyword>
<keyword id="KW-0479">Metal-binding</keyword>
<keyword id="KW-0547">Nucleotide-binding</keyword>
<keyword id="KW-1185">Reference proteome</keyword>
<keyword id="KW-0808">Transferase</keyword>
<keyword id="KW-0862">Zinc</keyword>
<keyword id="KW-0863">Zinc-finger</keyword>
<reference key="1">
    <citation type="submission" date="2007-11" db="EMBL/GenBank/DDBJ databases">
        <authorList>
            <consortium name="The Salmonella enterica serovar Arizonae Genome Sequencing Project"/>
            <person name="McClelland M."/>
            <person name="Sanderson E.K."/>
            <person name="Porwollik S."/>
            <person name="Spieth J."/>
            <person name="Clifton W.S."/>
            <person name="Fulton R."/>
            <person name="Chunyan W."/>
            <person name="Wollam A."/>
            <person name="Shah N."/>
            <person name="Pepin K."/>
            <person name="Bhonagiri V."/>
            <person name="Nash W."/>
            <person name="Johnson M."/>
            <person name="Thiruvilangam P."/>
            <person name="Wilson R."/>
        </authorList>
    </citation>
    <scope>NUCLEOTIDE SEQUENCE [LARGE SCALE GENOMIC DNA]</scope>
    <source>
        <strain>ATCC BAA-731 / CDC346-86 / RSK2980</strain>
    </source>
</reference>
<accession>A9MJ59</accession>
<comment type="function">
    <text evidence="1">Component of the acetyl coenzyme A carboxylase (ACC) complex. Biotin carboxylase (BC) catalyzes the carboxylation of biotin on its carrier protein (BCCP) and then the CO(2) group is transferred by the transcarboxylase to acetyl-CoA to form malonyl-CoA.</text>
</comment>
<comment type="catalytic activity">
    <reaction evidence="1">
        <text>N(6)-carboxybiotinyl-L-lysyl-[protein] + acetyl-CoA = N(6)-biotinyl-L-lysyl-[protein] + malonyl-CoA</text>
        <dbReference type="Rhea" id="RHEA:54728"/>
        <dbReference type="Rhea" id="RHEA-COMP:10505"/>
        <dbReference type="Rhea" id="RHEA-COMP:10506"/>
        <dbReference type="ChEBI" id="CHEBI:57288"/>
        <dbReference type="ChEBI" id="CHEBI:57384"/>
        <dbReference type="ChEBI" id="CHEBI:83144"/>
        <dbReference type="ChEBI" id="CHEBI:83145"/>
        <dbReference type="EC" id="2.1.3.15"/>
    </reaction>
</comment>
<comment type="cofactor">
    <cofactor evidence="1">
        <name>Zn(2+)</name>
        <dbReference type="ChEBI" id="CHEBI:29105"/>
    </cofactor>
    <text evidence="1">Binds 1 zinc ion per subunit.</text>
</comment>
<comment type="pathway">
    <text evidence="1">Lipid metabolism; malonyl-CoA biosynthesis; malonyl-CoA from acetyl-CoA: step 1/1.</text>
</comment>
<comment type="subunit">
    <text evidence="1">Acetyl-CoA carboxylase is a heterohexamer composed of biotin carboxyl carrier protein (AccB), biotin carboxylase (AccC) and two subunits each of ACCase subunit alpha (AccA) and ACCase subunit beta (AccD).</text>
</comment>
<comment type="subcellular location">
    <subcellularLocation>
        <location evidence="1">Cytoplasm</location>
    </subcellularLocation>
</comment>
<comment type="similarity">
    <text evidence="1">Belongs to the AccD/PCCB family.</text>
</comment>
<comment type="sequence caution" evidence="4">
    <conflict type="erroneous initiation">
        <sequence resource="EMBL-CDS" id="ABX20459"/>
    </conflict>
    <text>Extended N-terminus.</text>
</comment>
<sequence length="304" mass="33172">MSWIERIKSNITPTRKASIPEGVWTKCDSCGQVLYRAELERNLEVCPKCDHHMRMSARNRLHSLLDEGSLVELGSELEPKDVLKFRDSKKYKDRLASAQKETGEKDALVVMKGTLHGMPVVAAAFEFAFMGGSMGSVVGARFVRAVEQALEDNCPLICFSASGGARMQEALMSLMQMAKTSAALAKMQERGLPYISVLTDPTMGGVSASFAMLGDLNIAEPKALIGFAGPRVIEQTVREKLPPGFQRSEFLIEKGAIDMIVRRPEMRLKLASILAKLMNLPAPNPDAPREGVVVPPAPGQESEA</sequence>
<name>ACCD_SALAR</name>
<evidence type="ECO:0000255" key="1">
    <source>
        <dbReference type="HAMAP-Rule" id="MF_01395"/>
    </source>
</evidence>
<evidence type="ECO:0000255" key="2">
    <source>
        <dbReference type="PROSITE-ProRule" id="PRU01136"/>
    </source>
</evidence>
<evidence type="ECO:0000256" key="3">
    <source>
        <dbReference type="SAM" id="MobiDB-lite"/>
    </source>
</evidence>
<evidence type="ECO:0000305" key="4"/>
<organism>
    <name type="scientific">Salmonella arizonae (strain ATCC BAA-731 / CDC346-86 / RSK2980)</name>
    <dbReference type="NCBI Taxonomy" id="41514"/>
    <lineage>
        <taxon>Bacteria</taxon>
        <taxon>Pseudomonadati</taxon>
        <taxon>Pseudomonadota</taxon>
        <taxon>Gammaproteobacteria</taxon>
        <taxon>Enterobacterales</taxon>
        <taxon>Enterobacteriaceae</taxon>
        <taxon>Salmonella</taxon>
    </lineage>
</organism>
<protein>
    <recommendedName>
        <fullName evidence="1">Acetyl-coenzyme A carboxylase carboxyl transferase subunit beta</fullName>
        <shortName evidence="1">ACCase subunit beta</shortName>
        <shortName evidence="1">Acetyl-CoA carboxylase carboxyltransferase subunit beta</shortName>
        <ecNumber evidence="1">2.1.3.15</ecNumber>
    </recommendedName>
</protein>
<proteinExistence type="inferred from homology"/>